<protein>
    <recommendedName>
        <fullName evidence="1">UPF0434 protein NMCC_0628</fullName>
    </recommendedName>
</protein>
<dbReference type="EMBL" id="CP000381">
    <property type="protein sequence ID" value="ABX72825.1"/>
    <property type="molecule type" value="Genomic_DNA"/>
</dbReference>
<dbReference type="RefSeq" id="WP_002258255.1">
    <property type="nucleotide sequence ID" value="NC_010120.1"/>
</dbReference>
<dbReference type="SMR" id="A9M2V6"/>
<dbReference type="KEGG" id="nmn:NMCC_0628"/>
<dbReference type="HOGENOM" id="CLU_155659_3_1_4"/>
<dbReference type="Proteomes" id="UP000001177">
    <property type="component" value="Chromosome"/>
</dbReference>
<dbReference type="GO" id="GO:0005829">
    <property type="term" value="C:cytosol"/>
    <property type="evidence" value="ECO:0007669"/>
    <property type="project" value="TreeGrafter"/>
</dbReference>
<dbReference type="FunFam" id="2.20.25.10:FF:000002">
    <property type="entry name" value="UPF0434 protein YcaR"/>
    <property type="match status" value="1"/>
</dbReference>
<dbReference type="Gene3D" id="2.20.25.10">
    <property type="match status" value="1"/>
</dbReference>
<dbReference type="HAMAP" id="MF_01187">
    <property type="entry name" value="UPF0434"/>
    <property type="match status" value="1"/>
</dbReference>
<dbReference type="InterPro" id="IPR005651">
    <property type="entry name" value="Trm112-like"/>
</dbReference>
<dbReference type="PANTHER" id="PTHR33505:SF4">
    <property type="entry name" value="PROTEIN PREY, MITOCHONDRIAL"/>
    <property type="match status" value="1"/>
</dbReference>
<dbReference type="PANTHER" id="PTHR33505">
    <property type="entry name" value="ZGC:162634"/>
    <property type="match status" value="1"/>
</dbReference>
<dbReference type="Pfam" id="PF03966">
    <property type="entry name" value="Trm112p"/>
    <property type="match status" value="1"/>
</dbReference>
<dbReference type="SUPFAM" id="SSF158997">
    <property type="entry name" value="Trm112p-like"/>
    <property type="match status" value="1"/>
</dbReference>
<proteinExistence type="inferred from homology"/>
<comment type="similarity">
    <text evidence="1">Belongs to the UPF0434 family.</text>
</comment>
<gene>
    <name type="ordered locus">NMCC_0628</name>
</gene>
<organism>
    <name type="scientific">Neisseria meningitidis serogroup C (strain 053442)</name>
    <dbReference type="NCBI Taxonomy" id="374833"/>
    <lineage>
        <taxon>Bacteria</taxon>
        <taxon>Pseudomonadati</taxon>
        <taxon>Pseudomonadota</taxon>
        <taxon>Betaproteobacteria</taxon>
        <taxon>Neisseriales</taxon>
        <taxon>Neisseriaceae</taxon>
        <taxon>Neisseria</taxon>
    </lineage>
</organism>
<accession>A9M2V6</accession>
<reference key="1">
    <citation type="journal article" date="2008" name="Genomics">
        <title>Characterization of ST-4821 complex, a unique Neisseria meningitidis clone.</title>
        <authorList>
            <person name="Peng J."/>
            <person name="Yang L."/>
            <person name="Yang F."/>
            <person name="Yang J."/>
            <person name="Yan Y."/>
            <person name="Nie H."/>
            <person name="Zhang X."/>
            <person name="Xiong Z."/>
            <person name="Jiang Y."/>
            <person name="Cheng F."/>
            <person name="Xu X."/>
            <person name="Chen S."/>
            <person name="Sun L."/>
            <person name="Li W."/>
            <person name="Shen Y."/>
            <person name="Shao Z."/>
            <person name="Liang X."/>
            <person name="Xu J."/>
            <person name="Jin Q."/>
        </authorList>
    </citation>
    <scope>NUCLEOTIDE SEQUENCE [LARGE SCALE GENOMIC DNA]</scope>
    <source>
        <strain>053442</strain>
    </source>
</reference>
<evidence type="ECO:0000255" key="1">
    <source>
        <dbReference type="HAMAP-Rule" id="MF_01187"/>
    </source>
</evidence>
<feature type="chain" id="PRO_1000085459" description="UPF0434 protein NMCC_0628">
    <location>
        <begin position="1"/>
        <end position="60"/>
    </location>
</feature>
<name>Y628_NEIM0</name>
<sequence>MEKKFLDILVCPVTKGRLEYHQDKQELWSRQAKLAYPIKDGIPYMLENEARALGEEELKV</sequence>